<comment type="function">
    <text evidence="1">Tetrapolymerization of the monopyrrole PBG into the hydroxymethylbilane pre-uroporphyrinogen in several discrete steps.</text>
</comment>
<comment type="catalytic activity">
    <reaction evidence="1">
        <text>4 porphobilinogen + H2O = hydroxymethylbilane + 4 NH4(+)</text>
        <dbReference type="Rhea" id="RHEA:13185"/>
        <dbReference type="ChEBI" id="CHEBI:15377"/>
        <dbReference type="ChEBI" id="CHEBI:28938"/>
        <dbReference type="ChEBI" id="CHEBI:57845"/>
        <dbReference type="ChEBI" id="CHEBI:58126"/>
        <dbReference type="EC" id="2.5.1.61"/>
    </reaction>
</comment>
<comment type="cofactor">
    <cofactor evidence="1">
        <name>dipyrromethane</name>
        <dbReference type="ChEBI" id="CHEBI:60342"/>
    </cofactor>
    <text evidence="1">Binds 1 dipyrromethane group covalently.</text>
</comment>
<comment type="pathway">
    <text evidence="1">Porphyrin-containing compound metabolism; protoporphyrin-IX biosynthesis; coproporphyrinogen-III from 5-aminolevulinate: step 2/4.</text>
</comment>
<comment type="subunit">
    <text evidence="1">Monomer.</text>
</comment>
<comment type="miscellaneous">
    <text evidence="1">The porphobilinogen subunits are added to the dipyrromethane group.</text>
</comment>
<comment type="similarity">
    <text evidence="1">Belongs to the HMBS family.</text>
</comment>
<sequence length="313" mass="33492">MSSREIRIATRKSALALWQAEYVKARLEQAHPGLLVTLVPMVSRGDKLLDSPLSKIGGKGLFVKELETALLEDNADIAVHSMKDVPMDFPQGLGLFCICEREDPRDAFVSNTFESLDALPAGSIVGTSSLRRQAQLLARRPDLQIRFLRGNVNTRLAKLDAGEYNAIILAAAGLIRLGFEDRITSAISVDDSLPAGGQGAVGIECRSVDAEIHALLAPLHHEDTAVRVIAERSLNKHLNGGCQVPIACYAVLEGDDVWLRGLVGDPSGRVLLHADARAPQTSAQALGVQVAEALLAQGAAEILKAVYGEANNE</sequence>
<name>HEM3_PSESM</name>
<organism>
    <name type="scientific">Pseudomonas syringae pv. tomato (strain ATCC BAA-871 / DC3000)</name>
    <dbReference type="NCBI Taxonomy" id="223283"/>
    <lineage>
        <taxon>Bacteria</taxon>
        <taxon>Pseudomonadati</taxon>
        <taxon>Pseudomonadota</taxon>
        <taxon>Gammaproteobacteria</taxon>
        <taxon>Pseudomonadales</taxon>
        <taxon>Pseudomonadaceae</taxon>
        <taxon>Pseudomonas</taxon>
    </lineage>
</organism>
<reference key="1">
    <citation type="journal article" date="2003" name="Proc. Natl. Acad. Sci. U.S.A.">
        <title>The complete genome sequence of the Arabidopsis and tomato pathogen Pseudomonas syringae pv. tomato DC3000.</title>
        <authorList>
            <person name="Buell C.R."/>
            <person name="Joardar V."/>
            <person name="Lindeberg M."/>
            <person name="Selengut J."/>
            <person name="Paulsen I.T."/>
            <person name="Gwinn M.L."/>
            <person name="Dodson R.J."/>
            <person name="DeBoy R.T."/>
            <person name="Durkin A.S."/>
            <person name="Kolonay J.F."/>
            <person name="Madupu R."/>
            <person name="Daugherty S.C."/>
            <person name="Brinkac L.M."/>
            <person name="Beanan M.J."/>
            <person name="Haft D.H."/>
            <person name="Nelson W.C."/>
            <person name="Davidsen T.M."/>
            <person name="Zafar N."/>
            <person name="Zhou L."/>
            <person name="Liu J."/>
            <person name="Yuan Q."/>
            <person name="Khouri H.M."/>
            <person name="Fedorova N.B."/>
            <person name="Tran B."/>
            <person name="Russell D."/>
            <person name="Berry K.J."/>
            <person name="Utterback T.R."/>
            <person name="Van Aken S.E."/>
            <person name="Feldblyum T.V."/>
            <person name="D'Ascenzo M."/>
            <person name="Deng W.-L."/>
            <person name="Ramos A.R."/>
            <person name="Alfano J.R."/>
            <person name="Cartinhour S."/>
            <person name="Chatterjee A.K."/>
            <person name="Delaney T.P."/>
            <person name="Lazarowitz S.G."/>
            <person name="Martin G.B."/>
            <person name="Schneider D.J."/>
            <person name="Tang X."/>
            <person name="Bender C.L."/>
            <person name="White O."/>
            <person name="Fraser C.M."/>
            <person name="Collmer A."/>
        </authorList>
    </citation>
    <scope>NUCLEOTIDE SEQUENCE [LARGE SCALE GENOMIC DNA]</scope>
    <source>
        <strain>ATCC BAA-871 / DC3000</strain>
    </source>
</reference>
<accession>Q88B91</accession>
<protein>
    <recommendedName>
        <fullName evidence="1">Porphobilinogen deaminase</fullName>
        <shortName evidence="1">PBG</shortName>
        <ecNumber evidence="1">2.5.1.61</ecNumber>
    </recommendedName>
    <alternativeName>
        <fullName evidence="1">Hydroxymethylbilane synthase</fullName>
        <shortName evidence="1">HMBS</shortName>
    </alternativeName>
    <alternativeName>
        <fullName evidence="1">Pre-uroporphyrinogen synthase</fullName>
    </alternativeName>
</protein>
<gene>
    <name evidence="1" type="primary">hemC</name>
    <name type="ordered locus">PSPTO_0128</name>
</gene>
<dbReference type="EC" id="2.5.1.61" evidence="1"/>
<dbReference type="EMBL" id="AE016853">
    <property type="protein sequence ID" value="AAO53682.1"/>
    <property type="molecule type" value="Genomic_DNA"/>
</dbReference>
<dbReference type="RefSeq" id="NP_789987.1">
    <property type="nucleotide sequence ID" value="NC_004578.1"/>
</dbReference>
<dbReference type="RefSeq" id="WP_011103001.1">
    <property type="nucleotide sequence ID" value="NC_004578.1"/>
</dbReference>
<dbReference type="SMR" id="Q88B91"/>
<dbReference type="STRING" id="223283.PSPTO_0128"/>
<dbReference type="GeneID" id="1181736"/>
<dbReference type="KEGG" id="pst:PSPTO_0128"/>
<dbReference type="PATRIC" id="fig|223283.9.peg.135"/>
<dbReference type="eggNOG" id="COG0181">
    <property type="taxonomic scope" value="Bacteria"/>
</dbReference>
<dbReference type="HOGENOM" id="CLU_019704_0_2_6"/>
<dbReference type="OrthoDB" id="9810298at2"/>
<dbReference type="PhylomeDB" id="Q88B91"/>
<dbReference type="UniPathway" id="UPA00251">
    <property type="reaction ID" value="UER00319"/>
</dbReference>
<dbReference type="Proteomes" id="UP000002515">
    <property type="component" value="Chromosome"/>
</dbReference>
<dbReference type="GO" id="GO:0005737">
    <property type="term" value="C:cytoplasm"/>
    <property type="evidence" value="ECO:0007669"/>
    <property type="project" value="TreeGrafter"/>
</dbReference>
<dbReference type="GO" id="GO:0004418">
    <property type="term" value="F:hydroxymethylbilane synthase activity"/>
    <property type="evidence" value="ECO:0007669"/>
    <property type="project" value="UniProtKB-UniRule"/>
</dbReference>
<dbReference type="GO" id="GO:0006782">
    <property type="term" value="P:protoporphyrinogen IX biosynthetic process"/>
    <property type="evidence" value="ECO:0007669"/>
    <property type="project" value="UniProtKB-UniRule"/>
</dbReference>
<dbReference type="CDD" id="cd13646">
    <property type="entry name" value="PBP2_EcHMBS_like"/>
    <property type="match status" value="1"/>
</dbReference>
<dbReference type="FunFam" id="3.30.160.40:FF:000002">
    <property type="entry name" value="Porphobilinogen deaminase"/>
    <property type="match status" value="1"/>
</dbReference>
<dbReference type="FunFam" id="3.40.190.10:FF:000004">
    <property type="entry name" value="Porphobilinogen deaminase"/>
    <property type="match status" value="1"/>
</dbReference>
<dbReference type="FunFam" id="3.40.190.10:FF:000005">
    <property type="entry name" value="Porphobilinogen deaminase"/>
    <property type="match status" value="1"/>
</dbReference>
<dbReference type="Gene3D" id="3.40.190.10">
    <property type="entry name" value="Periplasmic binding protein-like II"/>
    <property type="match status" value="2"/>
</dbReference>
<dbReference type="Gene3D" id="3.30.160.40">
    <property type="entry name" value="Porphobilinogen deaminase, C-terminal domain"/>
    <property type="match status" value="1"/>
</dbReference>
<dbReference type="HAMAP" id="MF_00260">
    <property type="entry name" value="Porphobil_deam"/>
    <property type="match status" value="1"/>
</dbReference>
<dbReference type="InterPro" id="IPR000860">
    <property type="entry name" value="HemC"/>
</dbReference>
<dbReference type="InterPro" id="IPR022419">
    <property type="entry name" value="Porphobilin_deaminase_cofac_BS"/>
</dbReference>
<dbReference type="InterPro" id="IPR022417">
    <property type="entry name" value="Porphobilin_deaminase_N"/>
</dbReference>
<dbReference type="InterPro" id="IPR022418">
    <property type="entry name" value="Porphobilinogen_deaminase_C"/>
</dbReference>
<dbReference type="InterPro" id="IPR036803">
    <property type="entry name" value="Porphobilinogen_deaminase_C_sf"/>
</dbReference>
<dbReference type="NCBIfam" id="TIGR00212">
    <property type="entry name" value="hemC"/>
    <property type="match status" value="1"/>
</dbReference>
<dbReference type="PANTHER" id="PTHR11557">
    <property type="entry name" value="PORPHOBILINOGEN DEAMINASE"/>
    <property type="match status" value="1"/>
</dbReference>
<dbReference type="PANTHER" id="PTHR11557:SF0">
    <property type="entry name" value="PORPHOBILINOGEN DEAMINASE"/>
    <property type="match status" value="1"/>
</dbReference>
<dbReference type="Pfam" id="PF01379">
    <property type="entry name" value="Porphobil_deam"/>
    <property type="match status" value="1"/>
</dbReference>
<dbReference type="Pfam" id="PF03900">
    <property type="entry name" value="Porphobil_deamC"/>
    <property type="match status" value="1"/>
</dbReference>
<dbReference type="PIRSF" id="PIRSF001438">
    <property type="entry name" value="4pyrrol_synth_OHMeBilane_synth"/>
    <property type="match status" value="1"/>
</dbReference>
<dbReference type="PRINTS" id="PR00151">
    <property type="entry name" value="PORPHBDMNASE"/>
</dbReference>
<dbReference type="SUPFAM" id="SSF53850">
    <property type="entry name" value="Periplasmic binding protein-like II"/>
    <property type="match status" value="1"/>
</dbReference>
<dbReference type="SUPFAM" id="SSF54782">
    <property type="entry name" value="Porphobilinogen deaminase (hydroxymethylbilane synthase), C-terminal domain"/>
    <property type="match status" value="1"/>
</dbReference>
<dbReference type="PROSITE" id="PS00533">
    <property type="entry name" value="PORPHOBILINOGEN_DEAM"/>
    <property type="match status" value="1"/>
</dbReference>
<proteinExistence type="inferred from homology"/>
<keyword id="KW-0627">Porphyrin biosynthesis</keyword>
<keyword id="KW-1185">Reference proteome</keyword>
<keyword id="KW-0808">Transferase</keyword>
<evidence type="ECO:0000255" key="1">
    <source>
        <dbReference type="HAMAP-Rule" id="MF_00260"/>
    </source>
</evidence>
<feature type="chain" id="PRO_0000142976" description="Porphobilinogen deaminase">
    <location>
        <begin position="1"/>
        <end position="313"/>
    </location>
</feature>
<feature type="modified residue" description="S-(dipyrrolylmethanemethyl)cysteine" evidence="1">
    <location>
        <position position="242"/>
    </location>
</feature>